<comment type="similarity">
    <text evidence="1">Belongs to the bacterial ribosomal protein bL34 family.</text>
</comment>
<reference key="1">
    <citation type="journal article" date="2008" name="Infect. Immun.">
        <title>Genome of Mycoplasma arthritidis.</title>
        <authorList>
            <person name="Dybvig K."/>
            <person name="Zuhua C."/>
            <person name="Lao P."/>
            <person name="Jordan D.S."/>
            <person name="French C.T."/>
            <person name="Tu A.H."/>
            <person name="Loraine A.E."/>
        </authorList>
    </citation>
    <scope>NUCLEOTIDE SEQUENCE [LARGE SCALE GENOMIC DNA]</scope>
    <source>
        <strain>158L3-1</strain>
    </source>
</reference>
<name>RL34_META1</name>
<accession>B3PNJ7</accession>
<keyword id="KW-1185">Reference proteome</keyword>
<keyword id="KW-0687">Ribonucleoprotein</keyword>
<keyword id="KW-0689">Ribosomal protein</keyword>
<feature type="chain" id="PRO_1000196073" description="Large ribosomal subunit protein bL34">
    <location>
        <begin position="1"/>
        <end position="48"/>
    </location>
</feature>
<proteinExistence type="inferred from homology"/>
<gene>
    <name evidence="1" type="primary">rpmH</name>
    <name type="ordered locus">MARTH_orf883</name>
</gene>
<organism>
    <name type="scientific">Metamycoplasma arthritidis (strain 158L3-1)</name>
    <name type="common">Mycoplasma arthritidis</name>
    <dbReference type="NCBI Taxonomy" id="243272"/>
    <lineage>
        <taxon>Bacteria</taxon>
        <taxon>Bacillati</taxon>
        <taxon>Mycoplasmatota</taxon>
        <taxon>Mycoplasmoidales</taxon>
        <taxon>Metamycoplasmataceae</taxon>
        <taxon>Metamycoplasma</taxon>
    </lineage>
</organism>
<sequence>MKRTYQPKKRKHIKVHGFMARMQTKNGRKVLAARRAKGRSKLTVSDEK</sequence>
<evidence type="ECO:0000255" key="1">
    <source>
        <dbReference type="HAMAP-Rule" id="MF_00391"/>
    </source>
</evidence>
<evidence type="ECO:0000305" key="2"/>
<protein>
    <recommendedName>
        <fullName evidence="1">Large ribosomal subunit protein bL34</fullName>
    </recommendedName>
    <alternativeName>
        <fullName evidence="2">50S ribosomal protein L34</fullName>
    </alternativeName>
</protein>
<dbReference type="EMBL" id="CP001047">
    <property type="protein sequence ID" value="ACF07599.1"/>
    <property type="molecule type" value="Genomic_DNA"/>
</dbReference>
<dbReference type="RefSeq" id="WP_012498556.1">
    <property type="nucleotide sequence ID" value="NC_011025.1"/>
</dbReference>
<dbReference type="SMR" id="B3PNJ7"/>
<dbReference type="STRING" id="243272.MARTH_orf883"/>
<dbReference type="KEGG" id="mat:MARTH_orf883"/>
<dbReference type="eggNOG" id="COG0230">
    <property type="taxonomic scope" value="Bacteria"/>
</dbReference>
<dbReference type="HOGENOM" id="CLU_129938_2_0_14"/>
<dbReference type="Proteomes" id="UP000008812">
    <property type="component" value="Chromosome"/>
</dbReference>
<dbReference type="GO" id="GO:1990904">
    <property type="term" value="C:ribonucleoprotein complex"/>
    <property type="evidence" value="ECO:0007669"/>
    <property type="project" value="UniProtKB-KW"/>
</dbReference>
<dbReference type="GO" id="GO:0005840">
    <property type="term" value="C:ribosome"/>
    <property type="evidence" value="ECO:0007669"/>
    <property type="project" value="UniProtKB-KW"/>
</dbReference>
<dbReference type="GO" id="GO:0003735">
    <property type="term" value="F:structural constituent of ribosome"/>
    <property type="evidence" value="ECO:0007669"/>
    <property type="project" value="InterPro"/>
</dbReference>
<dbReference type="GO" id="GO:0006412">
    <property type="term" value="P:translation"/>
    <property type="evidence" value="ECO:0007669"/>
    <property type="project" value="UniProtKB-UniRule"/>
</dbReference>
<dbReference type="FunFam" id="1.10.287.3980:FF:000001">
    <property type="entry name" value="Mitochondrial ribosomal protein L34"/>
    <property type="match status" value="1"/>
</dbReference>
<dbReference type="Gene3D" id="1.10.287.3980">
    <property type="match status" value="1"/>
</dbReference>
<dbReference type="HAMAP" id="MF_00391">
    <property type="entry name" value="Ribosomal_bL34"/>
    <property type="match status" value="1"/>
</dbReference>
<dbReference type="InterPro" id="IPR000271">
    <property type="entry name" value="Ribosomal_bL34"/>
</dbReference>
<dbReference type="InterPro" id="IPR020939">
    <property type="entry name" value="Ribosomal_bL34_CS"/>
</dbReference>
<dbReference type="NCBIfam" id="TIGR01030">
    <property type="entry name" value="rpmH_bact"/>
    <property type="match status" value="1"/>
</dbReference>
<dbReference type="PANTHER" id="PTHR14503:SF4">
    <property type="entry name" value="LARGE RIBOSOMAL SUBUNIT PROTEIN BL34M"/>
    <property type="match status" value="1"/>
</dbReference>
<dbReference type="PANTHER" id="PTHR14503">
    <property type="entry name" value="MITOCHONDRIAL RIBOSOMAL PROTEIN 34 FAMILY MEMBER"/>
    <property type="match status" value="1"/>
</dbReference>
<dbReference type="Pfam" id="PF00468">
    <property type="entry name" value="Ribosomal_L34"/>
    <property type="match status" value="1"/>
</dbReference>
<dbReference type="PROSITE" id="PS00784">
    <property type="entry name" value="RIBOSOMAL_L34"/>
    <property type="match status" value="1"/>
</dbReference>